<evidence type="ECO:0000255" key="1">
    <source>
        <dbReference type="HAMAP-Rule" id="MF_00539"/>
    </source>
</evidence>
<evidence type="ECO:0000256" key="2">
    <source>
        <dbReference type="SAM" id="MobiDB-lite"/>
    </source>
</evidence>
<evidence type="ECO:0000305" key="3"/>
<name>RL27_ERYLH</name>
<proteinExistence type="inferred from homology"/>
<comment type="similarity">
    <text evidence="1">Belongs to the bacterial ribosomal protein bL27 family.</text>
</comment>
<reference key="1">
    <citation type="journal article" date="2009" name="J. Bacteriol.">
        <title>Complete genome sequence of Erythrobacter litoralis HTCC2594.</title>
        <authorList>
            <person name="Oh H.M."/>
            <person name="Giovannoni S.J."/>
            <person name="Ferriera S."/>
            <person name="Johnson J."/>
            <person name="Cho J.C."/>
        </authorList>
    </citation>
    <scope>NUCLEOTIDE SEQUENCE [LARGE SCALE GENOMIC DNA]</scope>
    <source>
        <strain>HTCC2594</strain>
    </source>
</reference>
<feature type="chain" id="PRO_1000017477" description="Large ribosomal subunit protein bL27">
    <location>
        <begin position="1"/>
        <end position="89"/>
    </location>
</feature>
<feature type="region of interest" description="Disordered" evidence="2">
    <location>
        <begin position="1"/>
        <end position="21"/>
    </location>
</feature>
<sequence length="89" mass="9493">MAHKKAGGSSRNGRDSAGRRLGVKKFGSEAVVAGNIIVRQRGTKFYPGSNVGMGKDHTLFALEDGVVRFHTGKQARKYVSVDAMAEAAE</sequence>
<gene>
    <name evidence="1" type="primary">rpmA</name>
    <name type="ordered locus">ELI_02815</name>
</gene>
<accession>Q2NCD6</accession>
<dbReference type="EMBL" id="CP000157">
    <property type="protein sequence ID" value="ABC62655.1"/>
    <property type="molecule type" value="Genomic_DNA"/>
</dbReference>
<dbReference type="RefSeq" id="WP_011413531.1">
    <property type="nucleotide sequence ID" value="NC_007722.1"/>
</dbReference>
<dbReference type="SMR" id="Q2NCD6"/>
<dbReference type="STRING" id="314225.ELI_02815"/>
<dbReference type="KEGG" id="eli:ELI_02815"/>
<dbReference type="eggNOG" id="COG0211">
    <property type="taxonomic scope" value="Bacteria"/>
</dbReference>
<dbReference type="HOGENOM" id="CLU_095424_4_0_5"/>
<dbReference type="OrthoDB" id="9803474at2"/>
<dbReference type="Proteomes" id="UP000008808">
    <property type="component" value="Chromosome"/>
</dbReference>
<dbReference type="GO" id="GO:1990904">
    <property type="term" value="C:ribonucleoprotein complex"/>
    <property type="evidence" value="ECO:0007669"/>
    <property type="project" value="UniProtKB-KW"/>
</dbReference>
<dbReference type="GO" id="GO:0005840">
    <property type="term" value="C:ribosome"/>
    <property type="evidence" value="ECO:0007669"/>
    <property type="project" value="UniProtKB-KW"/>
</dbReference>
<dbReference type="GO" id="GO:0003735">
    <property type="term" value="F:structural constituent of ribosome"/>
    <property type="evidence" value="ECO:0007669"/>
    <property type="project" value="InterPro"/>
</dbReference>
<dbReference type="GO" id="GO:0006412">
    <property type="term" value="P:translation"/>
    <property type="evidence" value="ECO:0007669"/>
    <property type="project" value="UniProtKB-UniRule"/>
</dbReference>
<dbReference type="FunFam" id="2.40.50.100:FF:000026">
    <property type="entry name" value="50S ribosomal protein L27"/>
    <property type="match status" value="1"/>
</dbReference>
<dbReference type="Gene3D" id="2.40.50.100">
    <property type="match status" value="1"/>
</dbReference>
<dbReference type="HAMAP" id="MF_00539">
    <property type="entry name" value="Ribosomal_bL27"/>
    <property type="match status" value="1"/>
</dbReference>
<dbReference type="InterPro" id="IPR001684">
    <property type="entry name" value="Ribosomal_bL27"/>
</dbReference>
<dbReference type="InterPro" id="IPR018261">
    <property type="entry name" value="Ribosomal_bL27_CS"/>
</dbReference>
<dbReference type="NCBIfam" id="TIGR00062">
    <property type="entry name" value="L27"/>
    <property type="match status" value="1"/>
</dbReference>
<dbReference type="PANTHER" id="PTHR15893:SF0">
    <property type="entry name" value="LARGE RIBOSOMAL SUBUNIT PROTEIN BL27M"/>
    <property type="match status" value="1"/>
</dbReference>
<dbReference type="PANTHER" id="PTHR15893">
    <property type="entry name" value="RIBOSOMAL PROTEIN L27"/>
    <property type="match status" value="1"/>
</dbReference>
<dbReference type="Pfam" id="PF01016">
    <property type="entry name" value="Ribosomal_L27"/>
    <property type="match status" value="1"/>
</dbReference>
<dbReference type="PRINTS" id="PR00063">
    <property type="entry name" value="RIBOSOMALL27"/>
</dbReference>
<dbReference type="SUPFAM" id="SSF110324">
    <property type="entry name" value="Ribosomal L27 protein-like"/>
    <property type="match status" value="1"/>
</dbReference>
<dbReference type="PROSITE" id="PS00831">
    <property type="entry name" value="RIBOSOMAL_L27"/>
    <property type="match status" value="1"/>
</dbReference>
<protein>
    <recommendedName>
        <fullName evidence="1">Large ribosomal subunit protein bL27</fullName>
    </recommendedName>
    <alternativeName>
        <fullName evidence="3">50S ribosomal protein L27</fullName>
    </alternativeName>
</protein>
<keyword id="KW-1185">Reference proteome</keyword>
<keyword id="KW-0687">Ribonucleoprotein</keyword>
<keyword id="KW-0689">Ribosomal protein</keyword>
<organism>
    <name type="scientific">Erythrobacter litoralis (strain HTCC2594)</name>
    <dbReference type="NCBI Taxonomy" id="314225"/>
    <lineage>
        <taxon>Bacteria</taxon>
        <taxon>Pseudomonadati</taxon>
        <taxon>Pseudomonadota</taxon>
        <taxon>Alphaproteobacteria</taxon>
        <taxon>Sphingomonadales</taxon>
        <taxon>Erythrobacteraceae</taxon>
        <taxon>Erythrobacter/Porphyrobacter group</taxon>
        <taxon>Erythrobacter</taxon>
    </lineage>
</organism>